<feature type="chain" id="PRO_1000121419" description="Large ribosomal subunit protein bL12">
    <location>
        <begin position="1"/>
        <end position="126"/>
    </location>
</feature>
<gene>
    <name evidence="1" type="primary">rplL</name>
    <name type="ordered locus">CbuK_0422</name>
</gene>
<accession>B6J5C1</accession>
<sequence length="126" mass="13248">MAQLSKDDILEAVANMSVMDVVDLVKAMEEKFGVSAQAAIAVAGPVAGGEAAAAEEKTEFNVKMVSFGDNKIGVIKAIRTITGLGLKEAKDLVESVPSVVKESVSKEEAEKIKKELEEAGAKVELE</sequence>
<comment type="function">
    <text evidence="1">Forms part of the ribosomal stalk which helps the ribosome interact with GTP-bound translation factors. Is thus essential for accurate translation.</text>
</comment>
<comment type="subunit">
    <text evidence="1">Homodimer. Part of the ribosomal stalk of the 50S ribosomal subunit. Forms a multimeric L10(L12)X complex, where L10 forms an elongated spine to which 2 to 4 L12 dimers bind in a sequential fashion. Binds GTP-bound translation factors.</text>
</comment>
<comment type="similarity">
    <text evidence="1">Belongs to the bacterial ribosomal protein bL12 family.</text>
</comment>
<dbReference type="EMBL" id="CP001020">
    <property type="protein sequence ID" value="ACJ19705.1"/>
    <property type="molecule type" value="Genomic_DNA"/>
</dbReference>
<dbReference type="RefSeq" id="WP_005771617.1">
    <property type="nucleotide sequence ID" value="NC_011528.1"/>
</dbReference>
<dbReference type="SMR" id="B6J5C1"/>
<dbReference type="KEGG" id="cbc:CbuK_0422"/>
<dbReference type="HOGENOM" id="CLU_086499_3_2_6"/>
<dbReference type="GO" id="GO:0022625">
    <property type="term" value="C:cytosolic large ribosomal subunit"/>
    <property type="evidence" value="ECO:0007669"/>
    <property type="project" value="TreeGrafter"/>
</dbReference>
<dbReference type="GO" id="GO:0003729">
    <property type="term" value="F:mRNA binding"/>
    <property type="evidence" value="ECO:0007669"/>
    <property type="project" value="TreeGrafter"/>
</dbReference>
<dbReference type="GO" id="GO:0003735">
    <property type="term" value="F:structural constituent of ribosome"/>
    <property type="evidence" value="ECO:0007669"/>
    <property type="project" value="InterPro"/>
</dbReference>
<dbReference type="GO" id="GO:0006412">
    <property type="term" value="P:translation"/>
    <property type="evidence" value="ECO:0007669"/>
    <property type="project" value="UniProtKB-UniRule"/>
</dbReference>
<dbReference type="CDD" id="cd00387">
    <property type="entry name" value="Ribosomal_L7_L12"/>
    <property type="match status" value="1"/>
</dbReference>
<dbReference type="FunFam" id="3.30.1390.10:FF:000001">
    <property type="entry name" value="50S ribosomal protein L7/L12"/>
    <property type="match status" value="1"/>
</dbReference>
<dbReference type="Gene3D" id="3.30.1390.10">
    <property type="match status" value="1"/>
</dbReference>
<dbReference type="Gene3D" id="1.20.5.710">
    <property type="entry name" value="Single helix bin"/>
    <property type="match status" value="1"/>
</dbReference>
<dbReference type="HAMAP" id="MF_00368">
    <property type="entry name" value="Ribosomal_bL12"/>
    <property type="match status" value="1"/>
</dbReference>
<dbReference type="InterPro" id="IPR000206">
    <property type="entry name" value="Ribosomal_bL12"/>
</dbReference>
<dbReference type="InterPro" id="IPR013823">
    <property type="entry name" value="Ribosomal_bL12_C"/>
</dbReference>
<dbReference type="InterPro" id="IPR014719">
    <property type="entry name" value="Ribosomal_bL12_C/ClpS-like"/>
</dbReference>
<dbReference type="InterPro" id="IPR008932">
    <property type="entry name" value="Ribosomal_bL12_oligo"/>
</dbReference>
<dbReference type="InterPro" id="IPR036235">
    <property type="entry name" value="Ribosomal_bL12_oligo_N_sf"/>
</dbReference>
<dbReference type="NCBIfam" id="TIGR00855">
    <property type="entry name" value="L12"/>
    <property type="match status" value="1"/>
</dbReference>
<dbReference type="PANTHER" id="PTHR45987">
    <property type="entry name" value="39S RIBOSOMAL PROTEIN L12"/>
    <property type="match status" value="1"/>
</dbReference>
<dbReference type="PANTHER" id="PTHR45987:SF4">
    <property type="entry name" value="LARGE RIBOSOMAL SUBUNIT PROTEIN BL12M"/>
    <property type="match status" value="1"/>
</dbReference>
<dbReference type="Pfam" id="PF00542">
    <property type="entry name" value="Ribosomal_L12"/>
    <property type="match status" value="1"/>
</dbReference>
<dbReference type="Pfam" id="PF16320">
    <property type="entry name" value="Ribosomal_L12_N"/>
    <property type="match status" value="1"/>
</dbReference>
<dbReference type="SUPFAM" id="SSF54736">
    <property type="entry name" value="ClpS-like"/>
    <property type="match status" value="1"/>
</dbReference>
<dbReference type="SUPFAM" id="SSF48300">
    <property type="entry name" value="Ribosomal protein L7/12, oligomerisation (N-terminal) domain"/>
    <property type="match status" value="1"/>
</dbReference>
<proteinExistence type="inferred from homology"/>
<evidence type="ECO:0000255" key="1">
    <source>
        <dbReference type="HAMAP-Rule" id="MF_00368"/>
    </source>
</evidence>
<evidence type="ECO:0000305" key="2"/>
<reference key="1">
    <citation type="journal article" date="2009" name="Infect. Immun.">
        <title>Comparative genomics reveal extensive transposon-mediated genomic plasticity and diversity among potential effector proteins within the genus Coxiella.</title>
        <authorList>
            <person name="Beare P.A."/>
            <person name="Unsworth N."/>
            <person name="Andoh M."/>
            <person name="Voth D.E."/>
            <person name="Omsland A."/>
            <person name="Gilk S.D."/>
            <person name="Williams K.P."/>
            <person name="Sobral B.W."/>
            <person name="Kupko J.J. III"/>
            <person name="Porcella S.F."/>
            <person name="Samuel J.E."/>
            <person name="Heinzen R.A."/>
        </authorList>
    </citation>
    <scope>NUCLEOTIDE SEQUENCE [LARGE SCALE GENOMIC DNA]</scope>
    <source>
        <strain>CbuK_Q154</strain>
    </source>
</reference>
<organism>
    <name type="scientific">Coxiella burnetii (strain CbuK_Q154)</name>
    <name type="common">Coxiella burnetii (strain Q154)</name>
    <dbReference type="NCBI Taxonomy" id="434924"/>
    <lineage>
        <taxon>Bacteria</taxon>
        <taxon>Pseudomonadati</taxon>
        <taxon>Pseudomonadota</taxon>
        <taxon>Gammaproteobacteria</taxon>
        <taxon>Legionellales</taxon>
        <taxon>Coxiellaceae</taxon>
        <taxon>Coxiella</taxon>
    </lineage>
</organism>
<protein>
    <recommendedName>
        <fullName evidence="1">Large ribosomal subunit protein bL12</fullName>
    </recommendedName>
    <alternativeName>
        <fullName evidence="2">50S ribosomal protein L7/L12</fullName>
    </alternativeName>
</protein>
<name>RL7_COXB1</name>
<keyword id="KW-0687">Ribonucleoprotein</keyword>
<keyword id="KW-0689">Ribosomal protein</keyword>